<comment type="function">
    <text evidence="1">NDH-1 shuttles electrons from NADH, via FMN and iron-sulfur (Fe-S) centers, to quinones in the respiratory chain. The immediate electron acceptor for the enzyme in this species is believed to be menaquinone. Couples the redox reaction to proton translocation (for every two electrons transferred, four hydrogen ions are translocated across the cytoplasmic membrane), and thus conserves the redox energy in a proton gradient (By similarity).</text>
</comment>
<comment type="catalytic activity">
    <reaction>
        <text>a quinone + NADH + 5 H(+)(in) = a quinol + NAD(+) + 4 H(+)(out)</text>
        <dbReference type="Rhea" id="RHEA:57888"/>
        <dbReference type="ChEBI" id="CHEBI:15378"/>
        <dbReference type="ChEBI" id="CHEBI:24646"/>
        <dbReference type="ChEBI" id="CHEBI:57540"/>
        <dbReference type="ChEBI" id="CHEBI:57945"/>
        <dbReference type="ChEBI" id="CHEBI:132124"/>
    </reaction>
</comment>
<comment type="subcellular location">
    <subcellularLocation>
        <location evidence="4">Cell membrane</location>
        <topology evidence="4">Multi-pass membrane protein</topology>
    </subcellularLocation>
</comment>
<comment type="similarity">
    <text evidence="4">Belongs to the complex I subunit 4 family.</text>
</comment>
<comment type="sequence caution" evidence="4">
    <conflict type="erroneous initiation">
        <sequence resource="EMBL-CDS" id="AAK47584"/>
    </conflict>
</comment>
<sequence length="553" mass="59207">MNNVPWLSVLWLVPLAGAVLIILLPPGRRRLAKWAGMVVSVLTLAVSIVVAAEFKPSAEPYQFVEKHSWIPAFGAGYTLGVDGIAVVLVLLTTVLIPLLLVAGWNDATDADDLSPASGRYPQRPAPPRLRSSGGERTRGVHAYVALTLAIESMVLMSVIALDVLLFYVFFEAMLIPMYFLIGGFGQGAGRSRAAVKFLLYNLFGGLIMLAAVIGLYVVTAQYDSGTFDFREIVAGVAAGRYGADPAVFKALFLGFMFAFAIKAPLWPFHRWLPDAAVESTPATAVLMMAVMDKVGTFGMLRYCLQLFPDPSTYFRPLIVTLAIIGVIYGAIVAIGQTDMMRLIAYTSISHFGFIIAGIFVMTTQGQSGSTLYMLNHGLSTAAVFLIAGFLIARRGSRSIADYGGVQKVAPILAGTFMVSAMATVSLPGLAPFISEFLVLLGTFSRYWLAAAFGVTALVLSAVYMLWLYQRVMTGPVAEGNERIGDLVGREMIVVAPLIALLLVLGVYPKPVLDIINPAVENTMTTIGQHDPAPSVAHPVPAVGASRTAEGPHP</sequence>
<feature type="chain" id="PRO_0000427934" description="NADH-quinone oxidoreductase subunit M">
    <location>
        <begin position="1"/>
        <end position="553"/>
    </location>
</feature>
<feature type="transmembrane region" description="Helical" evidence="2">
    <location>
        <begin position="4"/>
        <end position="24"/>
    </location>
</feature>
<feature type="transmembrane region" description="Helical" evidence="2">
    <location>
        <begin position="34"/>
        <end position="54"/>
    </location>
</feature>
<feature type="transmembrane region" description="Helical" evidence="2">
    <location>
        <begin position="84"/>
        <end position="104"/>
    </location>
</feature>
<feature type="transmembrane region" description="Helical" evidence="2">
    <location>
        <begin position="140"/>
        <end position="160"/>
    </location>
</feature>
<feature type="transmembrane region" description="Helical" evidence="2">
    <location>
        <begin position="164"/>
        <end position="184"/>
    </location>
</feature>
<feature type="transmembrane region" description="Helical" evidence="2">
    <location>
        <begin position="197"/>
        <end position="217"/>
    </location>
</feature>
<feature type="transmembrane region" description="Helical" evidence="2">
    <location>
        <begin position="246"/>
        <end position="266"/>
    </location>
</feature>
<feature type="transmembrane region" description="Helical" evidence="2">
    <location>
        <begin position="316"/>
        <end position="336"/>
    </location>
</feature>
<feature type="transmembrane region" description="Helical" evidence="2">
    <location>
        <begin position="342"/>
        <end position="362"/>
    </location>
</feature>
<feature type="transmembrane region" description="Helical" evidence="2">
    <location>
        <begin position="371"/>
        <end position="391"/>
    </location>
</feature>
<feature type="transmembrane region" description="Helical" evidence="2">
    <location>
        <begin position="420"/>
        <end position="440"/>
    </location>
</feature>
<feature type="transmembrane region" description="Helical" evidence="2">
    <location>
        <begin position="447"/>
        <end position="467"/>
    </location>
</feature>
<feature type="transmembrane region" description="Helical" evidence="2">
    <location>
        <begin position="492"/>
        <end position="512"/>
    </location>
</feature>
<feature type="region of interest" description="Disordered" evidence="3">
    <location>
        <begin position="113"/>
        <end position="135"/>
    </location>
</feature>
<feature type="region of interest" description="Disordered" evidence="3">
    <location>
        <begin position="527"/>
        <end position="553"/>
    </location>
</feature>
<feature type="compositionally biased region" description="Low complexity" evidence="3">
    <location>
        <begin position="531"/>
        <end position="544"/>
    </location>
</feature>
<protein>
    <recommendedName>
        <fullName>NADH-quinone oxidoreductase subunit M</fullName>
        <ecNumber>7.1.1.-</ecNumber>
    </recommendedName>
    <alternativeName>
        <fullName>NADH dehydrogenase I subunit M</fullName>
    </alternativeName>
    <alternativeName>
        <fullName>NDH-1 subunit M</fullName>
    </alternativeName>
</protein>
<reference key="1">
    <citation type="journal article" date="2002" name="J. Bacteriol.">
        <title>Whole-genome comparison of Mycobacterium tuberculosis clinical and laboratory strains.</title>
        <authorList>
            <person name="Fleischmann R.D."/>
            <person name="Alland D."/>
            <person name="Eisen J.A."/>
            <person name="Carpenter L."/>
            <person name="White O."/>
            <person name="Peterson J.D."/>
            <person name="DeBoy R.T."/>
            <person name="Dodson R.J."/>
            <person name="Gwinn M.L."/>
            <person name="Haft D.H."/>
            <person name="Hickey E.K."/>
            <person name="Kolonay J.F."/>
            <person name="Nelson W.C."/>
            <person name="Umayam L.A."/>
            <person name="Ermolaeva M.D."/>
            <person name="Salzberg S.L."/>
            <person name="Delcher A."/>
            <person name="Utterback T.R."/>
            <person name="Weidman J.F."/>
            <person name="Khouri H.M."/>
            <person name="Gill J."/>
            <person name="Mikula A."/>
            <person name="Bishai W."/>
            <person name="Jacobs W.R. Jr."/>
            <person name="Venter J.C."/>
            <person name="Fraser C.M."/>
        </authorList>
    </citation>
    <scope>NUCLEOTIDE SEQUENCE [LARGE SCALE GENOMIC DNA]</scope>
    <source>
        <strain>CDC 1551 / Oshkosh</strain>
    </source>
</reference>
<gene>
    <name type="primary">nuoM</name>
    <name type="ordered locus">MT3245</name>
</gene>
<accession>P9WIW4</accession>
<accession>L0TC01</accession>
<accession>O53307</accession>
<organism>
    <name type="scientific">Mycobacterium tuberculosis (strain CDC 1551 / Oshkosh)</name>
    <dbReference type="NCBI Taxonomy" id="83331"/>
    <lineage>
        <taxon>Bacteria</taxon>
        <taxon>Bacillati</taxon>
        <taxon>Actinomycetota</taxon>
        <taxon>Actinomycetes</taxon>
        <taxon>Mycobacteriales</taxon>
        <taxon>Mycobacteriaceae</taxon>
        <taxon>Mycobacterium</taxon>
        <taxon>Mycobacterium tuberculosis complex</taxon>
    </lineage>
</organism>
<evidence type="ECO:0000250" key="1"/>
<evidence type="ECO:0000255" key="2"/>
<evidence type="ECO:0000256" key="3">
    <source>
        <dbReference type="SAM" id="MobiDB-lite"/>
    </source>
</evidence>
<evidence type="ECO:0000305" key="4"/>
<proteinExistence type="inferred from homology"/>
<keyword id="KW-1003">Cell membrane</keyword>
<keyword id="KW-0472">Membrane</keyword>
<keyword id="KW-0520">NAD</keyword>
<keyword id="KW-0874">Quinone</keyword>
<keyword id="KW-1185">Reference proteome</keyword>
<keyword id="KW-1278">Translocase</keyword>
<keyword id="KW-0812">Transmembrane</keyword>
<keyword id="KW-1133">Transmembrane helix</keyword>
<dbReference type="EC" id="7.1.1.-"/>
<dbReference type="EMBL" id="AE000516">
    <property type="protein sequence ID" value="AAK47584.1"/>
    <property type="status" value="ALT_INIT"/>
    <property type="molecule type" value="Genomic_DNA"/>
</dbReference>
<dbReference type="PIR" id="C70946">
    <property type="entry name" value="C70946"/>
</dbReference>
<dbReference type="RefSeq" id="WP_003416460.1">
    <property type="nucleotide sequence ID" value="NZ_KK341227.1"/>
</dbReference>
<dbReference type="SMR" id="P9WIW4"/>
<dbReference type="KEGG" id="mtc:MT3245"/>
<dbReference type="PATRIC" id="fig|83331.31.peg.3493"/>
<dbReference type="HOGENOM" id="CLU_007100_4_4_11"/>
<dbReference type="Proteomes" id="UP000001020">
    <property type="component" value="Chromosome"/>
</dbReference>
<dbReference type="GO" id="GO:0005886">
    <property type="term" value="C:plasma membrane"/>
    <property type="evidence" value="ECO:0007669"/>
    <property type="project" value="UniProtKB-SubCell"/>
</dbReference>
<dbReference type="GO" id="GO:0008137">
    <property type="term" value="F:NADH dehydrogenase (ubiquinone) activity"/>
    <property type="evidence" value="ECO:0007669"/>
    <property type="project" value="InterPro"/>
</dbReference>
<dbReference type="GO" id="GO:0048039">
    <property type="term" value="F:ubiquinone binding"/>
    <property type="evidence" value="ECO:0007669"/>
    <property type="project" value="TreeGrafter"/>
</dbReference>
<dbReference type="GO" id="GO:0042773">
    <property type="term" value="P:ATP synthesis coupled electron transport"/>
    <property type="evidence" value="ECO:0007669"/>
    <property type="project" value="InterPro"/>
</dbReference>
<dbReference type="GO" id="GO:0015990">
    <property type="term" value="P:electron transport coupled proton transport"/>
    <property type="evidence" value="ECO:0007669"/>
    <property type="project" value="TreeGrafter"/>
</dbReference>
<dbReference type="InterPro" id="IPR010227">
    <property type="entry name" value="NADH_Q_OxRdtase_chainM/4"/>
</dbReference>
<dbReference type="InterPro" id="IPR003918">
    <property type="entry name" value="NADH_UbQ_OxRdtase"/>
</dbReference>
<dbReference type="InterPro" id="IPR001750">
    <property type="entry name" value="ND/Mrp_TM"/>
</dbReference>
<dbReference type="NCBIfam" id="TIGR01972">
    <property type="entry name" value="NDH_I_M"/>
    <property type="match status" value="1"/>
</dbReference>
<dbReference type="NCBIfam" id="NF004500">
    <property type="entry name" value="PRK05846.1-4"/>
    <property type="match status" value="1"/>
</dbReference>
<dbReference type="PANTHER" id="PTHR43507">
    <property type="entry name" value="NADH-UBIQUINONE OXIDOREDUCTASE CHAIN 4"/>
    <property type="match status" value="1"/>
</dbReference>
<dbReference type="PANTHER" id="PTHR43507:SF1">
    <property type="entry name" value="NADH-UBIQUINONE OXIDOREDUCTASE CHAIN 4"/>
    <property type="match status" value="1"/>
</dbReference>
<dbReference type="Pfam" id="PF00361">
    <property type="entry name" value="Proton_antipo_M"/>
    <property type="match status" value="1"/>
</dbReference>
<dbReference type="PRINTS" id="PR01437">
    <property type="entry name" value="NUOXDRDTASE4"/>
</dbReference>
<name>NUOM_MYCTO</name>